<reference key="1">
    <citation type="journal article" date="2003" name="Proc. Natl. Acad. Sci. U.S.A.">
        <title>The complete genome sequence of the Arabidopsis and tomato pathogen Pseudomonas syringae pv. tomato DC3000.</title>
        <authorList>
            <person name="Buell C.R."/>
            <person name="Joardar V."/>
            <person name="Lindeberg M."/>
            <person name="Selengut J."/>
            <person name="Paulsen I.T."/>
            <person name="Gwinn M.L."/>
            <person name="Dodson R.J."/>
            <person name="DeBoy R.T."/>
            <person name="Durkin A.S."/>
            <person name="Kolonay J.F."/>
            <person name="Madupu R."/>
            <person name="Daugherty S.C."/>
            <person name="Brinkac L.M."/>
            <person name="Beanan M.J."/>
            <person name="Haft D.H."/>
            <person name="Nelson W.C."/>
            <person name="Davidsen T.M."/>
            <person name="Zafar N."/>
            <person name="Zhou L."/>
            <person name="Liu J."/>
            <person name="Yuan Q."/>
            <person name="Khouri H.M."/>
            <person name="Fedorova N.B."/>
            <person name="Tran B."/>
            <person name="Russell D."/>
            <person name="Berry K.J."/>
            <person name="Utterback T.R."/>
            <person name="Van Aken S.E."/>
            <person name="Feldblyum T.V."/>
            <person name="D'Ascenzo M."/>
            <person name="Deng W.-L."/>
            <person name="Ramos A.R."/>
            <person name="Alfano J.R."/>
            <person name="Cartinhour S."/>
            <person name="Chatterjee A.K."/>
            <person name="Delaney T.P."/>
            <person name="Lazarowitz S.G."/>
            <person name="Martin G.B."/>
            <person name="Schneider D.J."/>
            <person name="Tang X."/>
            <person name="Bender C.L."/>
            <person name="White O."/>
            <person name="Fraser C.M."/>
            <person name="Collmer A."/>
        </authorList>
    </citation>
    <scope>NUCLEOTIDE SEQUENCE [LARGE SCALE GENOMIC DNA]</scope>
    <source>
        <strain>ATCC BAA-871 / DC3000</strain>
    </source>
</reference>
<protein>
    <recommendedName>
        <fullName evidence="1">Phosphoribosyl-dephospho-CoA transferase</fullName>
        <ecNumber evidence="1">2.7.7.66</ecNumber>
    </recommendedName>
    <alternativeName>
        <fullName evidence="1">Malonate decarboxylase holo-[acyl-carrier-protein] synthase</fullName>
        <shortName evidence="1">Holo-ACP synthase</shortName>
    </alternativeName>
</protein>
<name>MDCG_PSESM</name>
<sequence>MIDSAFVVLPHDLLWGMPLSALPDDAPQWAVDTLLAGQPVVVRRQAMPAGQVAVGLRGRGREQRYAASMWLTNVYRRVTPEQLIDCPSEHIQDWPALRALRQVRPVMDALERVWGVGGSAGFELASGIAALNQDSDLDLILRTPAPFSRRCAAELVEALAASVCRVDVQLQLDQGAVALREWARPAGRVLLKTASGARLVSDPWHLAEVCA</sequence>
<dbReference type="EC" id="2.7.7.66" evidence="1"/>
<dbReference type="EMBL" id="AE016853">
    <property type="protein sequence ID" value="AAO58509.1"/>
    <property type="molecule type" value="Genomic_DNA"/>
</dbReference>
<dbReference type="RefSeq" id="NP_794814.1">
    <property type="nucleotide sequence ID" value="NC_004578.1"/>
</dbReference>
<dbReference type="STRING" id="223283.PSPTO_5082"/>
<dbReference type="KEGG" id="pst:PSPTO_5082"/>
<dbReference type="PATRIC" id="fig|223283.9.peg.5203"/>
<dbReference type="eggNOG" id="ENOG502Z8NU">
    <property type="taxonomic scope" value="Bacteria"/>
</dbReference>
<dbReference type="HOGENOM" id="CLU_111981_0_0_6"/>
<dbReference type="OrthoDB" id="1275217at2"/>
<dbReference type="PhylomeDB" id="Q87V59"/>
<dbReference type="Proteomes" id="UP000002515">
    <property type="component" value="Chromosome"/>
</dbReference>
<dbReference type="GO" id="GO:0016779">
    <property type="term" value="F:nucleotidyltransferase activity"/>
    <property type="evidence" value="ECO:0007669"/>
    <property type="project" value="UniProtKB-UniRule"/>
</dbReference>
<dbReference type="HAMAP" id="MF_00650">
    <property type="entry name" value="Malonate_MdcG"/>
    <property type="match status" value="1"/>
</dbReference>
<dbReference type="InterPro" id="IPR017557">
    <property type="entry name" value="Holo-ACP_synthase"/>
</dbReference>
<dbReference type="InterPro" id="IPR049180">
    <property type="entry name" value="MdcG_C"/>
</dbReference>
<dbReference type="InterPro" id="IPR048903">
    <property type="entry name" value="MdcG_N"/>
</dbReference>
<dbReference type="NCBIfam" id="TIGR03135">
    <property type="entry name" value="malonate_mdcG"/>
    <property type="match status" value="1"/>
</dbReference>
<dbReference type="NCBIfam" id="NF002332">
    <property type="entry name" value="PRK01293.1"/>
    <property type="match status" value="1"/>
</dbReference>
<dbReference type="Pfam" id="PF10620">
    <property type="entry name" value="MdcG"/>
    <property type="match status" value="1"/>
</dbReference>
<dbReference type="Pfam" id="PF20866">
    <property type="entry name" value="MdcG_N"/>
    <property type="match status" value="1"/>
</dbReference>
<organism>
    <name type="scientific">Pseudomonas syringae pv. tomato (strain ATCC BAA-871 / DC3000)</name>
    <dbReference type="NCBI Taxonomy" id="223283"/>
    <lineage>
        <taxon>Bacteria</taxon>
        <taxon>Pseudomonadati</taxon>
        <taxon>Pseudomonadota</taxon>
        <taxon>Gammaproteobacteria</taxon>
        <taxon>Pseudomonadales</taxon>
        <taxon>Pseudomonadaceae</taxon>
        <taxon>Pseudomonas</taxon>
    </lineage>
</organism>
<keyword id="KW-0548">Nucleotidyltransferase</keyword>
<keyword id="KW-1185">Reference proteome</keyword>
<keyword id="KW-0808">Transferase</keyword>
<proteinExistence type="inferred from homology"/>
<comment type="function">
    <text evidence="1">Transfers 2'-(5-triphosphoribosyl)-3'-dephosphocoenzyme-A to the apo-[acyl-carrier-protein] of the malonate decarboxylase to yield holo-[acyl-carrier-protein].</text>
</comment>
<comment type="catalytic activity">
    <reaction evidence="1">
        <text>apo-[malonate decarboxylase ACP] + 2'-(5''-triphospho-alpha-D-ribosyl)-3'-dephospho-CoA = holo-[malonate decarboxylase ACP] + diphosphate</text>
        <dbReference type="Rhea" id="RHEA:42644"/>
        <dbReference type="Rhea" id="RHEA-COMP:10160"/>
        <dbReference type="Rhea" id="RHEA-COMP:10161"/>
        <dbReference type="ChEBI" id="CHEBI:29999"/>
        <dbReference type="ChEBI" id="CHEBI:33019"/>
        <dbReference type="ChEBI" id="CHEBI:61378"/>
        <dbReference type="ChEBI" id="CHEBI:82683"/>
        <dbReference type="EC" id="2.7.7.66"/>
    </reaction>
</comment>
<comment type="similarity">
    <text evidence="1">Belongs to the MdcG family.</text>
</comment>
<feature type="chain" id="PRO_0000220296" description="Phosphoribosyl-dephospho-CoA transferase">
    <location>
        <begin position="1"/>
        <end position="211"/>
    </location>
</feature>
<feature type="active site" evidence="1">
    <location>
        <position position="136"/>
    </location>
</feature>
<feature type="active site" evidence="1">
    <location>
        <position position="138"/>
    </location>
</feature>
<gene>
    <name evidence="1" type="primary">mdcG</name>
    <name type="ordered locus">PSPTO_5082</name>
</gene>
<evidence type="ECO:0000255" key="1">
    <source>
        <dbReference type="HAMAP-Rule" id="MF_00650"/>
    </source>
</evidence>
<accession>Q87V59</accession>